<gene>
    <name evidence="1" type="primary">hscA</name>
    <name type="ordered locus">Pnec_0473</name>
</gene>
<protein>
    <recommendedName>
        <fullName evidence="1">Chaperone protein HscA homolog</fullName>
    </recommendedName>
</protein>
<sequence length="621" mass="67003">MALLQISEPGKSLAPHQRRIAVGIDLGTTNSLVAIVRDALPKVLPDAQGRELLPSVIRYLPNGRTQAGFEALESVVIDPKNTIVSVKRFMGRGLLDVEHIESAPYDFVDQPGMLKLRTVAGDKSPIEVSAEILARLRQLAEDSVSDEIVGAVITVPAYFDDAQRQATKDAAKLAGIEVLRLLNEPTAAAITYGLDNASEGVYAVYDLGGGTFDISILRMSRGVFEVLATGGDSALGGDDFDHRLYCWVIEQAKLPPLSIHDHRTLLQACKHAKEQLSHNPLARVHETLADGTVVNVGISQAQFFEITQNLVTKTLMTCKKALRDAGLKAEDVKGVVMVGGSTRMPNVQRAVAELFGTQPLNNLNPDQVVALGAAMQADLLAGNQSKDDEWLLLDVIPLSLGIETMGGLVEKSIPRNTPIPVARAQDFTTFKDGQTALAIQVVQGERELAQDCRSLGRFELRGIPAMAAGAARIRVTFQVDADGFLSVSATEQGSGVKASIDIKPSYGLTDAEITRMLQDGFASAKEDLLSRSLREEQVNAQRLLDAVQTALDSDRSLLNAEEQAAIDREMTTLQKILNEETNSAVVRKAVDQAVKATDDFAQKRMNASIQKALSGKNVTEI</sequence>
<accession>B1XTR3</accession>
<reference key="1">
    <citation type="journal article" date="2013" name="Proc. Natl. Acad. Sci. U.S.A.">
        <title>Polynucleobacter necessarius, a model for genome reduction in both free-living and symbiotic bacteria.</title>
        <authorList>
            <person name="Boscaro V."/>
            <person name="Felletti M."/>
            <person name="Vannini C."/>
            <person name="Ackerman M.S."/>
            <person name="Chain P.S."/>
            <person name="Malfatti S."/>
            <person name="Vergez L.M."/>
            <person name="Shin M."/>
            <person name="Doak T.G."/>
            <person name="Lynch M."/>
            <person name="Petroni G."/>
        </authorList>
    </citation>
    <scope>NUCLEOTIDE SEQUENCE [LARGE SCALE GENOMIC DNA]</scope>
    <source>
        <strain>STIR1</strain>
    </source>
</reference>
<proteinExistence type="inferred from homology"/>
<organism>
    <name type="scientific">Polynucleobacter necessarius subsp. necessarius (strain STIR1)</name>
    <dbReference type="NCBI Taxonomy" id="452638"/>
    <lineage>
        <taxon>Bacteria</taxon>
        <taxon>Pseudomonadati</taxon>
        <taxon>Pseudomonadota</taxon>
        <taxon>Betaproteobacteria</taxon>
        <taxon>Burkholderiales</taxon>
        <taxon>Burkholderiaceae</taxon>
        <taxon>Polynucleobacter</taxon>
    </lineage>
</organism>
<keyword id="KW-0067">ATP-binding</keyword>
<keyword id="KW-0143">Chaperone</keyword>
<keyword id="KW-0547">Nucleotide-binding</keyword>
<dbReference type="EMBL" id="CP001010">
    <property type="protein sequence ID" value="ACB43740.1"/>
    <property type="molecule type" value="Genomic_DNA"/>
</dbReference>
<dbReference type="SMR" id="B1XTR3"/>
<dbReference type="STRING" id="452638.Pnec_0473"/>
<dbReference type="KEGG" id="pne:Pnec_0473"/>
<dbReference type="eggNOG" id="COG0443">
    <property type="taxonomic scope" value="Bacteria"/>
</dbReference>
<dbReference type="HOGENOM" id="CLU_005965_2_1_4"/>
<dbReference type="OrthoDB" id="9766019at2"/>
<dbReference type="GO" id="GO:0005524">
    <property type="term" value="F:ATP binding"/>
    <property type="evidence" value="ECO:0007669"/>
    <property type="project" value="UniProtKB-KW"/>
</dbReference>
<dbReference type="GO" id="GO:0016887">
    <property type="term" value="F:ATP hydrolysis activity"/>
    <property type="evidence" value="ECO:0007669"/>
    <property type="project" value="UniProtKB-UniRule"/>
</dbReference>
<dbReference type="GO" id="GO:0140662">
    <property type="term" value="F:ATP-dependent protein folding chaperone"/>
    <property type="evidence" value="ECO:0007669"/>
    <property type="project" value="InterPro"/>
</dbReference>
<dbReference type="GO" id="GO:0051082">
    <property type="term" value="F:unfolded protein binding"/>
    <property type="evidence" value="ECO:0007669"/>
    <property type="project" value="InterPro"/>
</dbReference>
<dbReference type="GO" id="GO:0016226">
    <property type="term" value="P:iron-sulfur cluster assembly"/>
    <property type="evidence" value="ECO:0007669"/>
    <property type="project" value="InterPro"/>
</dbReference>
<dbReference type="FunFam" id="3.30.420.40:FF:000046">
    <property type="entry name" value="Chaperone protein HscA"/>
    <property type="match status" value="1"/>
</dbReference>
<dbReference type="FunFam" id="2.60.34.10:FF:000005">
    <property type="entry name" value="Chaperone protein HscA homolog"/>
    <property type="match status" value="1"/>
</dbReference>
<dbReference type="Gene3D" id="1.20.1270.10">
    <property type="match status" value="1"/>
</dbReference>
<dbReference type="Gene3D" id="3.30.420.40">
    <property type="match status" value="2"/>
</dbReference>
<dbReference type="Gene3D" id="3.90.640.10">
    <property type="entry name" value="Actin, Chain A, domain 4"/>
    <property type="match status" value="1"/>
</dbReference>
<dbReference type="Gene3D" id="2.60.34.10">
    <property type="entry name" value="Substrate Binding Domain Of DNAk, Chain A, domain 1"/>
    <property type="match status" value="1"/>
</dbReference>
<dbReference type="HAMAP" id="MF_00679">
    <property type="entry name" value="HscA"/>
    <property type="match status" value="1"/>
</dbReference>
<dbReference type="InterPro" id="IPR043129">
    <property type="entry name" value="ATPase_NBD"/>
</dbReference>
<dbReference type="InterPro" id="IPR018181">
    <property type="entry name" value="Heat_shock_70_CS"/>
</dbReference>
<dbReference type="InterPro" id="IPR029048">
    <property type="entry name" value="HSP70_C_sf"/>
</dbReference>
<dbReference type="InterPro" id="IPR029047">
    <property type="entry name" value="HSP70_peptide-bd_sf"/>
</dbReference>
<dbReference type="InterPro" id="IPR013126">
    <property type="entry name" value="Hsp_70_fam"/>
</dbReference>
<dbReference type="InterPro" id="IPR010236">
    <property type="entry name" value="ISC_FeS_clus_asmbl_HscA"/>
</dbReference>
<dbReference type="NCBIfam" id="TIGR01991">
    <property type="entry name" value="HscA"/>
    <property type="match status" value="1"/>
</dbReference>
<dbReference type="NCBIfam" id="NF003520">
    <property type="entry name" value="PRK05183.1"/>
    <property type="match status" value="1"/>
</dbReference>
<dbReference type="PANTHER" id="PTHR19375">
    <property type="entry name" value="HEAT SHOCK PROTEIN 70KDA"/>
    <property type="match status" value="1"/>
</dbReference>
<dbReference type="Pfam" id="PF00012">
    <property type="entry name" value="HSP70"/>
    <property type="match status" value="1"/>
</dbReference>
<dbReference type="PRINTS" id="PR00301">
    <property type="entry name" value="HEATSHOCK70"/>
</dbReference>
<dbReference type="SUPFAM" id="SSF53067">
    <property type="entry name" value="Actin-like ATPase domain"/>
    <property type="match status" value="2"/>
</dbReference>
<dbReference type="SUPFAM" id="SSF100934">
    <property type="entry name" value="Heat shock protein 70kD (HSP70), C-terminal subdomain"/>
    <property type="match status" value="1"/>
</dbReference>
<dbReference type="SUPFAM" id="SSF100920">
    <property type="entry name" value="Heat shock protein 70kD (HSP70), peptide-binding domain"/>
    <property type="match status" value="1"/>
</dbReference>
<dbReference type="PROSITE" id="PS00297">
    <property type="entry name" value="HSP70_1"/>
    <property type="match status" value="1"/>
</dbReference>
<dbReference type="PROSITE" id="PS00329">
    <property type="entry name" value="HSP70_2"/>
    <property type="match status" value="1"/>
</dbReference>
<dbReference type="PROSITE" id="PS01036">
    <property type="entry name" value="HSP70_3"/>
    <property type="match status" value="1"/>
</dbReference>
<feature type="chain" id="PRO_1000131682" description="Chaperone protein HscA homolog">
    <location>
        <begin position="1"/>
        <end position="621"/>
    </location>
</feature>
<evidence type="ECO:0000255" key="1">
    <source>
        <dbReference type="HAMAP-Rule" id="MF_00679"/>
    </source>
</evidence>
<name>HSCA_POLNS</name>
<comment type="function">
    <text evidence="1">Chaperone involved in the maturation of iron-sulfur cluster-containing proteins. Has a low intrinsic ATPase activity which is markedly stimulated by HscB.</text>
</comment>
<comment type="similarity">
    <text evidence="1">Belongs to the heat shock protein 70 family.</text>
</comment>